<name>ACOX2_CANMA</name>
<gene>
    <name type="primary">POX2</name>
</gene>
<sequence length="724" mass="82274">MALISNLKDEYDHPTKTDPDTNPKIVADIISSKEPPQPSQDVAEERSRTDWDLKEMHEFLEGDEAKSEEILRLYQSIERDPILQTRPEQFDYTKNEERESVALRINQMSKYLETEPYEKFRRRLQLMTVNDPSLGIRMLVNIGLFLNCIRGNGTQKQYDFWAKTKEAGKVKQLLRLFRYDELGHGFNVAGCEIFATFDEKTDQFIIDTPHIGATKWWIGGAAHSATHTVCYARLIVKDIDYGVKTFVVPLRDSTHNLLPGVAIGDIGPKLGRQGVDNGWIQFTEVRIPRFFMLQRWCKVDRQGNVTLPPLEQLSYISLLEGRVGMATDSYRIGARYTTIALRYAVARRQFSKGDGQPETKLIDYTLHQRRLLPYLALTYLAALGTDKLERQHDQLLKNLDKALATNNKLLLKNTIQSTKSMFVDSGSLKSTLTWLASDLINEARQSCGGHGYSAYNGFGKTYGDWAVQCTWEGDNNVLGMSAGKTIIKTVQQVLNGKQLKDSTLEFLNDAPALSSAKKAVIRIKSHVDDTDRVLKAIAGLISKYAKDLIPVSYQSWDSIGPQRVVLSKFRCHYYLLETFNERLNDRIKAKSPARPHLENIIKLYYVTNVLGPFIDEFLRFGVISPSVAKYITTEYPQKLCAAIRPYVIGLTDSFQQPDNFINSLIGRYDGNVYTNYLTNVTNVNDPTNYKAPYSEALEAMLNRASLEERERFEKSKAVAAKLSQ</sequence>
<protein>
    <recommendedName>
        <fullName>Acyl-coenzyme A oxidase 2</fullName>
        <shortName>AOX 2</shortName>
        <shortName>Acyl-CoA oxidase 2</shortName>
        <ecNumber>1.3.3.6</ecNumber>
    </recommendedName>
</protein>
<feature type="chain" id="PRO_0000204693" description="Acyl-coenzyme A oxidase 2">
    <location>
        <begin position="1"/>
        <end position="724"/>
    </location>
</feature>
<feature type="region of interest" description="Disordered" evidence="1">
    <location>
        <begin position="1"/>
        <end position="23"/>
    </location>
</feature>
<feature type="compositionally biased region" description="Basic and acidic residues" evidence="1">
    <location>
        <begin position="7"/>
        <end position="21"/>
    </location>
</feature>
<organism>
    <name type="scientific">Candida maltosa</name>
    <name type="common">Yeast</name>
    <dbReference type="NCBI Taxonomy" id="5479"/>
    <lineage>
        <taxon>Eukaryota</taxon>
        <taxon>Fungi</taxon>
        <taxon>Dikarya</taxon>
        <taxon>Ascomycota</taxon>
        <taxon>Saccharomycotina</taxon>
        <taxon>Pichiomycetes</taxon>
        <taxon>Debaryomycetaceae</taxon>
        <taxon>Candida/Lodderomyces clade</taxon>
        <taxon>Candida</taxon>
    </lineage>
</organism>
<comment type="catalytic activity">
    <reaction>
        <text>a 2,3-saturated acyl-CoA + O2 = a (2E)-enoyl-CoA + H2O2</text>
        <dbReference type="Rhea" id="RHEA:38959"/>
        <dbReference type="ChEBI" id="CHEBI:15379"/>
        <dbReference type="ChEBI" id="CHEBI:16240"/>
        <dbReference type="ChEBI" id="CHEBI:58856"/>
        <dbReference type="ChEBI" id="CHEBI:65111"/>
        <dbReference type="EC" id="1.3.3.6"/>
    </reaction>
</comment>
<comment type="cofactor">
    <cofactor>
        <name>FAD</name>
        <dbReference type="ChEBI" id="CHEBI:57692"/>
    </cofactor>
</comment>
<comment type="pathway">
    <text>Lipid metabolism; peroxisomal fatty acid beta-oxidation.</text>
</comment>
<comment type="subcellular location">
    <subcellularLocation>
        <location>Peroxisome</location>
    </subcellularLocation>
</comment>
<comment type="similarity">
    <text evidence="2">Belongs to the acyl-CoA oxidase family.</text>
</comment>
<keyword id="KW-0274">FAD</keyword>
<keyword id="KW-0276">Fatty acid metabolism</keyword>
<keyword id="KW-0285">Flavoprotein</keyword>
<keyword id="KW-0443">Lipid metabolism</keyword>
<keyword id="KW-0560">Oxidoreductase</keyword>
<keyword id="KW-0576">Peroxisome</keyword>
<reference key="1">
    <citation type="journal article" date="1995" name="Gene">
        <title>Cloning and characterization of the POX2 gene in Candida maltosa.</title>
        <authorList>
            <person name="Masuda Y."/>
            <person name="Park S.M."/>
            <person name="Ohta A."/>
            <person name="Takagi M."/>
        </authorList>
    </citation>
    <scope>NUCLEOTIDE SEQUENCE [GENOMIC DNA]</scope>
    <source>
        <strain>ATCC 28140 / CBS 5611 / IAM 12247 / JCM 1504 / NBRC 1977</strain>
    </source>
</reference>
<proteinExistence type="inferred from homology"/>
<dbReference type="EC" id="1.3.3.6"/>
<dbReference type="EMBL" id="D21228">
    <property type="protein sequence ID" value="BAA04761.1"/>
    <property type="molecule type" value="Genomic_DNA"/>
</dbReference>
<dbReference type="PIR" id="JC4563">
    <property type="entry name" value="JC4563"/>
</dbReference>
<dbReference type="SMR" id="Q00468"/>
<dbReference type="UniPathway" id="UPA00661"/>
<dbReference type="GO" id="GO:0005777">
    <property type="term" value="C:peroxisome"/>
    <property type="evidence" value="ECO:0007669"/>
    <property type="project" value="UniProtKB-SubCell"/>
</dbReference>
<dbReference type="GO" id="GO:0003997">
    <property type="term" value="F:acyl-CoA oxidase activity"/>
    <property type="evidence" value="ECO:0007669"/>
    <property type="project" value="UniProtKB-EC"/>
</dbReference>
<dbReference type="GO" id="GO:0071949">
    <property type="term" value="F:FAD binding"/>
    <property type="evidence" value="ECO:0007669"/>
    <property type="project" value="InterPro"/>
</dbReference>
<dbReference type="GO" id="GO:0005504">
    <property type="term" value="F:fatty acid binding"/>
    <property type="evidence" value="ECO:0007669"/>
    <property type="project" value="TreeGrafter"/>
</dbReference>
<dbReference type="GO" id="GO:0033540">
    <property type="term" value="P:fatty acid beta-oxidation using acyl-CoA oxidase"/>
    <property type="evidence" value="ECO:0007669"/>
    <property type="project" value="UniProtKB-UniPathway"/>
</dbReference>
<dbReference type="GO" id="GO:0055088">
    <property type="term" value="P:lipid homeostasis"/>
    <property type="evidence" value="ECO:0007669"/>
    <property type="project" value="TreeGrafter"/>
</dbReference>
<dbReference type="FunFam" id="1.10.540.10:FF:000018">
    <property type="entry name" value="Acyl-coenzyme A oxidase"/>
    <property type="match status" value="1"/>
</dbReference>
<dbReference type="FunFam" id="1.20.140.10:FF:000015">
    <property type="entry name" value="Acyl-coenzyme A oxidase"/>
    <property type="match status" value="1"/>
</dbReference>
<dbReference type="FunFam" id="1.20.140.10:FF:000041">
    <property type="entry name" value="Acyl-coenzyme A oxidase"/>
    <property type="match status" value="1"/>
</dbReference>
<dbReference type="FunFam" id="2.40.110.10:FF:000050">
    <property type="entry name" value="Acyl-coenzyme A oxidase"/>
    <property type="match status" value="1"/>
</dbReference>
<dbReference type="Gene3D" id="1.10.540.10">
    <property type="entry name" value="Acyl-CoA dehydrogenase/oxidase, N-terminal domain"/>
    <property type="match status" value="1"/>
</dbReference>
<dbReference type="Gene3D" id="2.40.110.10">
    <property type="entry name" value="Butyryl-CoA Dehydrogenase, subunit A, domain 2"/>
    <property type="match status" value="1"/>
</dbReference>
<dbReference type="Gene3D" id="1.20.140.10">
    <property type="entry name" value="Butyryl-CoA Dehydrogenase, subunit A, domain 3"/>
    <property type="match status" value="2"/>
</dbReference>
<dbReference type="InterPro" id="IPR055060">
    <property type="entry name" value="ACOX_C_alpha1"/>
</dbReference>
<dbReference type="InterPro" id="IPR029320">
    <property type="entry name" value="Acyl-CoA_ox_N"/>
</dbReference>
<dbReference type="InterPro" id="IPR006091">
    <property type="entry name" value="Acyl-CoA_Oxase/DH_mid-dom"/>
</dbReference>
<dbReference type="InterPro" id="IPR046373">
    <property type="entry name" value="Acyl-CoA_Oxase/DH_mid-dom_sf"/>
</dbReference>
<dbReference type="InterPro" id="IPR012258">
    <property type="entry name" value="Acyl-CoA_oxidase"/>
</dbReference>
<dbReference type="InterPro" id="IPR002655">
    <property type="entry name" value="Acyl-CoA_oxidase_C"/>
</dbReference>
<dbReference type="InterPro" id="IPR036250">
    <property type="entry name" value="AcylCo_DH-like_C"/>
</dbReference>
<dbReference type="InterPro" id="IPR037069">
    <property type="entry name" value="AcylCoA_DH/ox_N_sf"/>
</dbReference>
<dbReference type="InterPro" id="IPR009100">
    <property type="entry name" value="AcylCoA_DH/oxidase_NM_dom_sf"/>
</dbReference>
<dbReference type="PANTHER" id="PTHR10909:SF352">
    <property type="entry name" value="ACYL-COENZYME A OXIDASE-LIKE PROTEIN"/>
    <property type="match status" value="1"/>
</dbReference>
<dbReference type="PANTHER" id="PTHR10909">
    <property type="entry name" value="ELECTRON TRANSPORT OXIDOREDUCTASE"/>
    <property type="match status" value="1"/>
</dbReference>
<dbReference type="Pfam" id="PF01756">
    <property type="entry name" value="ACOX"/>
    <property type="match status" value="1"/>
</dbReference>
<dbReference type="Pfam" id="PF22924">
    <property type="entry name" value="ACOX_C_alpha1"/>
    <property type="match status" value="1"/>
</dbReference>
<dbReference type="Pfam" id="PF02770">
    <property type="entry name" value="Acyl-CoA_dh_M"/>
    <property type="match status" value="1"/>
</dbReference>
<dbReference type="Pfam" id="PF14749">
    <property type="entry name" value="Acyl-CoA_ox_N"/>
    <property type="match status" value="1"/>
</dbReference>
<dbReference type="PIRSF" id="PIRSF000168">
    <property type="entry name" value="Acyl-CoA_oxidase"/>
    <property type="match status" value="1"/>
</dbReference>
<dbReference type="SUPFAM" id="SSF47203">
    <property type="entry name" value="Acyl-CoA dehydrogenase C-terminal domain-like"/>
    <property type="match status" value="2"/>
</dbReference>
<dbReference type="SUPFAM" id="SSF56645">
    <property type="entry name" value="Acyl-CoA dehydrogenase NM domain-like"/>
    <property type="match status" value="1"/>
</dbReference>
<evidence type="ECO:0000256" key="1">
    <source>
        <dbReference type="SAM" id="MobiDB-lite"/>
    </source>
</evidence>
<evidence type="ECO:0000305" key="2"/>
<accession>Q00468</accession>